<evidence type="ECO:0000255" key="1">
    <source>
        <dbReference type="HAMAP-Rule" id="MF_01367"/>
    </source>
</evidence>
<evidence type="ECO:0000305" key="2"/>
<organism>
    <name type="scientific">Porphyra purpurea</name>
    <name type="common">Red seaweed</name>
    <name type="synonym">Ulva purpurea</name>
    <dbReference type="NCBI Taxonomy" id="2787"/>
    <lineage>
        <taxon>Eukaryota</taxon>
        <taxon>Rhodophyta</taxon>
        <taxon>Bangiophyceae</taxon>
        <taxon>Bangiales</taxon>
        <taxon>Bangiaceae</taxon>
        <taxon>Porphyra</taxon>
    </lineage>
</organism>
<accession>P51304</accession>
<reference key="1">
    <citation type="journal article" date="1995" name="Plant Mol. Biol. Rep.">
        <title>Complete nucleotide sequence of the Porphyra purpurea chloroplast genome.</title>
        <authorList>
            <person name="Reith M.E."/>
            <person name="Munholland J."/>
        </authorList>
    </citation>
    <scope>NUCLEOTIDE SEQUENCE [LARGE SCALE GENOMIC DNA]</scope>
    <source>
        <strain>Avonport</strain>
    </source>
</reference>
<keyword id="KW-0150">Chloroplast</keyword>
<keyword id="KW-0934">Plastid</keyword>
<keyword id="KW-0687">Ribonucleoprotein</keyword>
<keyword id="KW-0689">Ribosomal protein</keyword>
<keyword id="KW-0694">RNA-binding</keyword>
<keyword id="KW-0699">rRNA-binding</keyword>
<sequence length="122" mass="13411">MIQTQSYLNVADNSGARKIMCIRVLGTSNPSYASIGDVIIGVVKDASPNMPVKRSDVVRAVVVRTRKALRRNDGMSIRFDDNAAVIINQDNNPRGTRVFGPIARELRDKNFSKIISLAPEVV</sequence>
<protein>
    <recommendedName>
        <fullName evidence="1">Large ribosomal subunit protein uL14c</fullName>
    </recommendedName>
    <alternativeName>
        <fullName evidence="2">50S ribosomal protein L14, chloroplastic</fullName>
    </alternativeName>
</protein>
<geneLocation type="chloroplast"/>
<dbReference type="EMBL" id="U38804">
    <property type="protein sequence ID" value="AAC08190.1"/>
    <property type="molecule type" value="Genomic_DNA"/>
</dbReference>
<dbReference type="PIR" id="S73225">
    <property type="entry name" value="S73225"/>
</dbReference>
<dbReference type="RefSeq" id="NP_053914.1">
    <property type="nucleotide sequence ID" value="NC_000925.1"/>
</dbReference>
<dbReference type="SMR" id="P51304"/>
<dbReference type="GeneID" id="809933"/>
<dbReference type="GO" id="GO:0009507">
    <property type="term" value="C:chloroplast"/>
    <property type="evidence" value="ECO:0007669"/>
    <property type="project" value="UniProtKB-SubCell"/>
</dbReference>
<dbReference type="GO" id="GO:0022625">
    <property type="term" value="C:cytosolic large ribosomal subunit"/>
    <property type="evidence" value="ECO:0007669"/>
    <property type="project" value="TreeGrafter"/>
</dbReference>
<dbReference type="GO" id="GO:0070180">
    <property type="term" value="F:large ribosomal subunit rRNA binding"/>
    <property type="evidence" value="ECO:0007669"/>
    <property type="project" value="TreeGrafter"/>
</dbReference>
<dbReference type="GO" id="GO:0003735">
    <property type="term" value="F:structural constituent of ribosome"/>
    <property type="evidence" value="ECO:0007669"/>
    <property type="project" value="InterPro"/>
</dbReference>
<dbReference type="GO" id="GO:0006412">
    <property type="term" value="P:translation"/>
    <property type="evidence" value="ECO:0007669"/>
    <property type="project" value="UniProtKB-UniRule"/>
</dbReference>
<dbReference type="CDD" id="cd00337">
    <property type="entry name" value="Ribosomal_uL14"/>
    <property type="match status" value="1"/>
</dbReference>
<dbReference type="FunFam" id="2.40.150.20:FF:000001">
    <property type="entry name" value="50S ribosomal protein L14"/>
    <property type="match status" value="1"/>
</dbReference>
<dbReference type="Gene3D" id="2.40.150.20">
    <property type="entry name" value="Ribosomal protein L14"/>
    <property type="match status" value="1"/>
</dbReference>
<dbReference type="HAMAP" id="MF_01367">
    <property type="entry name" value="Ribosomal_uL14"/>
    <property type="match status" value="1"/>
</dbReference>
<dbReference type="InterPro" id="IPR000218">
    <property type="entry name" value="Ribosomal_uL14"/>
</dbReference>
<dbReference type="InterPro" id="IPR005745">
    <property type="entry name" value="Ribosomal_uL14_bac-type"/>
</dbReference>
<dbReference type="InterPro" id="IPR019972">
    <property type="entry name" value="Ribosomal_uL14_CS"/>
</dbReference>
<dbReference type="InterPro" id="IPR036853">
    <property type="entry name" value="Ribosomal_uL14_sf"/>
</dbReference>
<dbReference type="NCBIfam" id="TIGR01067">
    <property type="entry name" value="rplN_bact"/>
    <property type="match status" value="1"/>
</dbReference>
<dbReference type="PANTHER" id="PTHR11761">
    <property type="entry name" value="50S/60S RIBOSOMAL PROTEIN L14/L23"/>
    <property type="match status" value="1"/>
</dbReference>
<dbReference type="PANTHER" id="PTHR11761:SF3">
    <property type="entry name" value="LARGE RIBOSOMAL SUBUNIT PROTEIN UL14M"/>
    <property type="match status" value="1"/>
</dbReference>
<dbReference type="Pfam" id="PF00238">
    <property type="entry name" value="Ribosomal_L14"/>
    <property type="match status" value="1"/>
</dbReference>
<dbReference type="SMART" id="SM01374">
    <property type="entry name" value="Ribosomal_L14"/>
    <property type="match status" value="1"/>
</dbReference>
<dbReference type="SUPFAM" id="SSF50193">
    <property type="entry name" value="Ribosomal protein L14"/>
    <property type="match status" value="1"/>
</dbReference>
<dbReference type="PROSITE" id="PS00049">
    <property type="entry name" value="RIBOSOMAL_L14"/>
    <property type="match status" value="1"/>
</dbReference>
<feature type="chain" id="PRO_0000128599" description="Large ribosomal subunit protein uL14c">
    <location>
        <begin position="1"/>
        <end position="122"/>
    </location>
</feature>
<proteinExistence type="inferred from homology"/>
<name>RK14_PORPU</name>
<comment type="function">
    <text evidence="1">Binds to 23S rRNA.</text>
</comment>
<comment type="subunit">
    <text evidence="1">Part of the 50S ribosomal subunit.</text>
</comment>
<comment type="subcellular location">
    <subcellularLocation>
        <location>Plastid</location>
        <location>Chloroplast</location>
    </subcellularLocation>
</comment>
<comment type="similarity">
    <text evidence="1">Belongs to the universal ribosomal protein uL14 family.</text>
</comment>
<gene>
    <name evidence="1" type="primary">rpl14</name>
</gene>